<reference key="1">
    <citation type="submission" date="2004-07" db="EMBL/GenBank/DDBJ databases">
        <authorList>
            <consortium name="NIH - Xenopus Gene Collection (XGC) project"/>
        </authorList>
    </citation>
    <scope>NUCLEOTIDE SEQUENCE [LARGE SCALE MRNA]</scope>
</reference>
<comment type="function">
    <text evidence="2">Catalyzes the NAD-dependent decarboxylation of UDP-glucuronic acid to UDP-xylose. Necessary for the biosynthesis of the core tetrasaccharide in glycosaminoglycan biosynthesis.</text>
</comment>
<comment type="catalytic activity">
    <reaction evidence="2">
        <text>UDP-alpha-D-glucuronate + H(+) = UDP-alpha-D-xylose + CO2</text>
        <dbReference type="Rhea" id="RHEA:23916"/>
        <dbReference type="ChEBI" id="CHEBI:15378"/>
        <dbReference type="ChEBI" id="CHEBI:16526"/>
        <dbReference type="ChEBI" id="CHEBI:57632"/>
        <dbReference type="ChEBI" id="CHEBI:58052"/>
        <dbReference type="EC" id="4.1.1.35"/>
    </reaction>
    <physiologicalReaction direction="left-to-right" evidence="2">
        <dbReference type="Rhea" id="RHEA:23917"/>
    </physiologicalReaction>
</comment>
<comment type="cofactor">
    <cofactor evidence="2">
        <name>NAD(+)</name>
        <dbReference type="ChEBI" id="CHEBI:57540"/>
    </cofactor>
</comment>
<comment type="pathway">
    <text evidence="2">Nucleotide-sugar biosynthesis; UDP-alpha-D-xylose biosynthesis; UDP-alpha-D-xylose from UDP-alpha-D-glucuronate: step 1/1.</text>
</comment>
<comment type="subunit">
    <text evidence="2">Homodimer and homotetramer.</text>
</comment>
<comment type="subcellular location">
    <subcellularLocation>
        <location evidence="1">Golgi apparatus</location>
        <location evidence="1">Golgi stack membrane</location>
        <topology evidence="2">Single-pass type II membrane protein</topology>
    </subcellularLocation>
</comment>
<comment type="similarity">
    <text evidence="5">Belongs to the NAD(P)-dependent epimerase/dehydratase family. UDP-glucuronic acid decarboxylase subfamily.</text>
</comment>
<evidence type="ECO:0000250" key="1">
    <source>
        <dbReference type="UniProtKB" id="Q5PQX0"/>
    </source>
</evidence>
<evidence type="ECO:0000250" key="2">
    <source>
        <dbReference type="UniProtKB" id="Q8NBZ7"/>
    </source>
</evidence>
<evidence type="ECO:0000255" key="3"/>
<evidence type="ECO:0000256" key="4">
    <source>
        <dbReference type="SAM" id="MobiDB-lite"/>
    </source>
</evidence>
<evidence type="ECO:0000305" key="5"/>
<accession>Q6DF08</accession>
<dbReference type="EC" id="4.1.1.35" evidence="2"/>
<dbReference type="EMBL" id="BC076935">
    <property type="protein sequence ID" value="AAH76935.1"/>
    <property type="molecule type" value="mRNA"/>
</dbReference>
<dbReference type="RefSeq" id="NP_001006849.1">
    <property type="nucleotide sequence ID" value="NM_001006848.1"/>
</dbReference>
<dbReference type="SMR" id="Q6DF08"/>
<dbReference type="FunCoup" id="Q6DF08">
    <property type="interactions" value="812"/>
</dbReference>
<dbReference type="STRING" id="8364.ENSXETP00000001899"/>
<dbReference type="GlyCosmos" id="Q6DF08">
    <property type="glycosylation" value="2 sites, No reported glycans"/>
</dbReference>
<dbReference type="PaxDb" id="8364-ENSXETP00000046851"/>
<dbReference type="DNASU" id="448599"/>
<dbReference type="GeneID" id="448599"/>
<dbReference type="KEGG" id="xtr:448599"/>
<dbReference type="AGR" id="Xenbase:XB-GENE-997577"/>
<dbReference type="CTD" id="80146"/>
<dbReference type="Xenbase" id="XB-GENE-997577">
    <property type="gene designation" value="uxs1"/>
</dbReference>
<dbReference type="eggNOG" id="KOG1429">
    <property type="taxonomic scope" value="Eukaryota"/>
</dbReference>
<dbReference type="InParanoid" id="Q6DF08"/>
<dbReference type="OMA" id="KYPKVKY"/>
<dbReference type="OrthoDB" id="331544at2759"/>
<dbReference type="Reactome" id="R-XTR-173599">
    <property type="pathway name" value="Formation of the active cofactor, UDP-glucuronate"/>
</dbReference>
<dbReference type="Reactome" id="R-XTR-1971475">
    <property type="pathway name" value="A tetrasaccharide linker sequence is required for GAG synthesis"/>
</dbReference>
<dbReference type="UniPathway" id="UPA00796">
    <property type="reaction ID" value="UER00771"/>
</dbReference>
<dbReference type="Proteomes" id="UP000008143">
    <property type="component" value="Chromosome 2"/>
</dbReference>
<dbReference type="Bgee" id="ENSXETG00000021671">
    <property type="expression patterns" value="Expressed in brain and 14 other cell types or tissues"/>
</dbReference>
<dbReference type="GO" id="GO:0032580">
    <property type="term" value="C:Golgi cisterna membrane"/>
    <property type="evidence" value="ECO:0007669"/>
    <property type="project" value="UniProtKB-SubCell"/>
</dbReference>
<dbReference type="GO" id="GO:0070403">
    <property type="term" value="F:NAD+ binding"/>
    <property type="evidence" value="ECO:0007669"/>
    <property type="project" value="InterPro"/>
</dbReference>
<dbReference type="GO" id="GO:0048040">
    <property type="term" value="F:UDP-glucuronate decarboxylase activity"/>
    <property type="evidence" value="ECO:0007669"/>
    <property type="project" value="UniProtKB-EC"/>
</dbReference>
<dbReference type="GO" id="GO:0042732">
    <property type="term" value="P:D-xylose metabolic process"/>
    <property type="evidence" value="ECO:0007669"/>
    <property type="project" value="InterPro"/>
</dbReference>
<dbReference type="GO" id="GO:0033320">
    <property type="term" value="P:UDP-D-xylose biosynthetic process"/>
    <property type="evidence" value="ECO:0007669"/>
    <property type="project" value="UniProtKB-UniPathway"/>
</dbReference>
<dbReference type="CDD" id="cd05230">
    <property type="entry name" value="UGD_SDR_e"/>
    <property type="match status" value="1"/>
</dbReference>
<dbReference type="FunFam" id="3.40.50.720:FF:000065">
    <property type="entry name" value="UDP-glucuronic acid decarboxylase 1"/>
    <property type="match status" value="1"/>
</dbReference>
<dbReference type="Gene3D" id="3.40.50.720">
    <property type="entry name" value="NAD(P)-binding Rossmann-like Domain"/>
    <property type="match status" value="2"/>
</dbReference>
<dbReference type="InterPro" id="IPR016040">
    <property type="entry name" value="NAD(P)-bd_dom"/>
</dbReference>
<dbReference type="InterPro" id="IPR036291">
    <property type="entry name" value="NAD(P)-bd_dom_sf"/>
</dbReference>
<dbReference type="InterPro" id="IPR044516">
    <property type="entry name" value="UXS-like"/>
</dbReference>
<dbReference type="InterPro" id="IPR021761">
    <property type="entry name" value="UXS1_N"/>
</dbReference>
<dbReference type="PANTHER" id="PTHR43078:SF6">
    <property type="entry name" value="UDP-GLUCURONIC ACID DECARBOXYLASE 1"/>
    <property type="match status" value="1"/>
</dbReference>
<dbReference type="PANTHER" id="PTHR43078">
    <property type="entry name" value="UDP-GLUCURONIC ACID DECARBOXYLASE-RELATED"/>
    <property type="match status" value="1"/>
</dbReference>
<dbReference type="Pfam" id="PF16363">
    <property type="entry name" value="GDP_Man_Dehyd"/>
    <property type="match status" value="1"/>
</dbReference>
<dbReference type="Pfam" id="PF11803">
    <property type="entry name" value="UXS1_N"/>
    <property type="match status" value="1"/>
</dbReference>
<dbReference type="SUPFAM" id="SSF51735">
    <property type="entry name" value="NAD(P)-binding Rossmann-fold domains"/>
    <property type="match status" value="1"/>
</dbReference>
<keyword id="KW-0210">Decarboxylase</keyword>
<keyword id="KW-0325">Glycoprotein</keyword>
<keyword id="KW-0333">Golgi apparatus</keyword>
<keyword id="KW-0456">Lyase</keyword>
<keyword id="KW-0472">Membrane</keyword>
<keyword id="KW-0520">NAD</keyword>
<keyword id="KW-1185">Reference proteome</keyword>
<keyword id="KW-0735">Signal-anchor</keyword>
<keyword id="KW-0812">Transmembrane</keyword>
<keyword id="KW-1133">Transmembrane helix</keyword>
<organism>
    <name type="scientific">Xenopus tropicalis</name>
    <name type="common">Western clawed frog</name>
    <name type="synonym">Silurana tropicalis</name>
    <dbReference type="NCBI Taxonomy" id="8364"/>
    <lineage>
        <taxon>Eukaryota</taxon>
        <taxon>Metazoa</taxon>
        <taxon>Chordata</taxon>
        <taxon>Craniata</taxon>
        <taxon>Vertebrata</taxon>
        <taxon>Euteleostomi</taxon>
        <taxon>Amphibia</taxon>
        <taxon>Batrachia</taxon>
        <taxon>Anura</taxon>
        <taxon>Pipoidea</taxon>
        <taxon>Pipidae</taxon>
        <taxon>Xenopodinae</taxon>
        <taxon>Xenopus</taxon>
        <taxon>Silurana</taxon>
    </lineage>
</organism>
<gene>
    <name type="primary">uxs1</name>
</gene>
<sequence>MVRTRIQRLLTGINRRMMKLLIALALIAYVASVWGNFVNMSKSIQENGEQKMEKKIEEVIAPLREKIQNLERSFTQKYPPVKFLSEKDRKRILITGGAGFVGSHLTDKLMMDGHEVTVVDNFFTGRKRNVEHWIGHENFELINHDVVEPLYIEVDQIYHLASPASPPNYMYNPIKTLKTNTIGTLNMLGLAKRVGARLLLASTSEVYGDPEVHPQSEEYWGHVNPIGPRACYDEGKRVAETMCYAYMKQEGVEVRVARIFNTFGPRMHMNDGRVVSNFILQALQGEQLTVYGSGEQTRAFQYVSDLVNGLVALMNSNVSSPVNLGNPQEHSIVQFARLIKQLVGSGGEISFLSEAQDDPQRRKPDIRKAKLLLGWEPVVPLEEGLNKTIHYFRKELEHQANNQYIPKPKPARVKKGRTRHN</sequence>
<proteinExistence type="evidence at transcript level"/>
<feature type="chain" id="PRO_0000183274" description="UDP-glucuronic acid decarboxylase 1">
    <location>
        <begin position="1"/>
        <end position="421"/>
    </location>
</feature>
<feature type="topological domain" description="Cytoplasmic" evidence="3">
    <location>
        <begin position="1"/>
        <end position="19"/>
    </location>
</feature>
<feature type="transmembrane region" description="Helical" evidence="3">
    <location>
        <begin position="20"/>
        <end position="40"/>
    </location>
</feature>
<feature type="topological domain" description="Lumenal" evidence="3">
    <location>
        <begin position="41"/>
        <end position="421"/>
    </location>
</feature>
<feature type="region of interest" description="Disordered" evidence="4">
    <location>
        <begin position="400"/>
        <end position="421"/>
    </location>
</feature>
<feature type="compositionally biased region" description="Basic residues" evidence="4">
    <location>
        <begin position="409"/>
        <end position="421"/>
    </location>
</feature>
<feature type="active site" description="Proton acceptor" evidence="2">
    <location>
        <position position="232"/>
    </location>
</feature>
<feature type="binding site" evidence="2">
    <location>
        <position position="99"/>
    </location>
    <ligand>
        <name>NAD(+)</name>
        <dbReference type="ChEBI" id="CHEBI:57540"/>
    </ligand>
</feature>
<feature type="binding site" evidence="2">
    <location>
        <position position="100"/>
    </location>
    <ligand>
        <name>NAD(+)</name>
        <dbReference type="ChEBI" id="CHEBI:57540"/>
    </ligand>
</feature>
<feature type="binding site" evidence="2">
    <location>
        <position position="101"/>
    </location>
    <ligand>
        <name>NAD(+)</name>
        <dbReference type="ChEBI" id="CHEBI:57540"/>
    </ligand>
</feature>
<feature type="binding site" evidence="2">
    <location>
        <position position="120"/>
    </location>
    <ligand>
        <name>NAD(+)</name>
        <dbReference type="ChEBI" id="CHEBI:57540"/>
    </ligand>
</feature>
<feature type="binding site" evidence="2">
    <location>
        <position position="121"/>
    </location>
    <ligand>
        <name>NAD(+)</name>
        <dbReference type="ChEBI" id="CHEBI:57540"/>
    </ligand>
</feature>
<feature type="binding site" evidence="2">
    <location>
        <position position="123"/>
    </location>
    <ligand>
        <name>NAD(+)</name>
        <dbReference type="ChEBI" id="CHEBI:57540"/>
    </ligand>
</feature>
<feature type="binding site" evidence="2">
    <location>
        <position position="124"/>
    </location>
    <ligand>
        <name>NAD(+)</name>
        <dbReference type="ChEBI" id="CHEBI:57540"/>
    </ligand>
</feature>
<feature type="binding site" evidence="2">
    <location>
        <position position="125"/>
    </location>
    <ligand>
        <name>NAD(+)</name>
        <dbReference type="ChEBI" id="CHEBI:57540"/>
    </ligand>
</feature>
<feature type="binding site" evidence="2">
    <location>
        <position position="145"/>
    </location>
    <ligand>
        <name>NAD(+)</name>
        <dbReference type="ChEBI" id="CHEBI:57540"/>
    </ligand>
</feature>
<feature type="binding site" evidence="2">
    <location>
        <position position="146"/>
    </location>
    <ligand>
        <name>NAD(+)</name>
        <dbReference type="ChEBI" id="CHEBI:57540"/>
    </ligand>
</feature>
<feature type="binding site" evidence="2">
    <location>
        <position position="150"/>
    </location>
    <ligand>
        <name>UDP-alpha-D-glucuronate</name>
        <dbReference type="ChEBI" id="CHEBI:58052"/>
    </ligand>
</feature>
<feature type="binding site" evidence="2">
    <location>
        <position position="151"/>
    </location>
    <ligand>
        <name>UDP-alpha-D-glucuronate</name>
        <dbReference type="ChEBI" id="CHEBI:58052"/>
    </ligand>
</feature>
<feature type="binding site" evidence="2">
    <location>
        <position position="160"/>
    </location>
    <ligand>
        <name>NAD(+)</name>
        <dbReference type="ChEBI" id="CHEBI:57540"/>
    </ligand>
</feature>
<feature type="binding site" evidence="2">
    <location>
        <position position="162"/>
    </location>
    <ligand>
        <name>NAD(+)</name>
        <dbReference type="ChEBI" id="CHEBI:57540"/>
    </ligand>
</feature>
<feature type="binding site" evidence="2">
    <location>
        <position position="178"/>
    </location>
    <ligand>
        <name>UDP-alpha-D-glucuronate</name>
        <dbReference type="ChEBI" id="CHEBI:58052"/>
    </ligand>
</feature>
<feature type="binding site" evidence="2">
    <location>
        <position position="179"/>
    </location>
    <ligand>
        <name>NAD(+)</name>
        <dbReference type="ChEBI" id="CHEBI:57540"/>
    </ligand>
</feature>
<feature type="binding site" evidence="2">
    <location>
        <position position="186"/>
    </location>
    <ligand>
        <name>UDP-alpha-D-glucuronate</name>
        <dbReference type="ChEBI" id="CHEBI:58052"/>
    </ligand>
</feature>
<feature type="binding site" evidence="2">
    <location>
        <position position="189"/>
    </location>
    <ligand>
        <name>UDP-alpha-D-glucuronate</name>
        <dbReference type="ChEBI" id="CHEBI:58052"/>
    </ligand>
</feature>
<feature type="binding site" evidence="2">
    <location>
        <position position="192"/>
    </location>
    <ligand>
        <name>UDP-alpha-D-glucuronate</name>
        <dbReference type="ChEBI" id="CHEBI:58052"/>
    </ligand>
</feature>
<feature type="binding site" evidence="2">
    <location>
        <position position="193"/>
    </location>
    <ligand>
        <name>UDP-alpha-D-glucuronate</name>
        <dbReference type="ChEBI" id="CHEBI:58052"/>
    </ligand>
</feature>
<feature type="binding site" evidence="2">
    <location>
        <position position="201"/>
    </location>
    <ligand>
        <name>NAD(+)</name>
        <dbReference type="ChEBI" id="CHEBI:57540"/>
    </ligand>
</feature>
<feature type="binding site" evidence="2">
    <location>
        <position position="232"/>
    </location>
    <ligand>
        <name>NAD(+)</name>
        <dbReference type="ChEBI" id="CHEBI:57540"/>
    </ligand>
</feature>
<feature type="binding site" evidence="2">
    <location>
        <position position="236"/>
    </location>
    <ligand>
        <name>NAD(+)</name>
        <dbReference type="ChEBI" id="CHEBI:57540"/>
    </ligand>
</feature>
<feature type="binding site" evidence="2">
    <location>
        <position position="246"/>
    </location>
    <ligand>
        <name>UDP-alpha-D-glucuronate</name>
        <dbReference type="ChEBI" id="CHEBI:58052"/>
    </ligand>
</feature>
<feature type="binding site" evidence="2">
    <location>
        <position position="249"/>
    </location>
    <ligand>
        <name>UDP-alpha-D-glucuronate</name>
        <dbReference type="ChEBI" id="CHEBI:58052"/>
    </ligand>
</feature>
<feature type="binding site" evidence="2">
    <location>
        <position position="250"/>
    </location>
    <ligand>
        <name>UDP-alpha-D-glucuronate</name>
        <dbReference type="ChEBI" id="CHEBI:58052"/>
    </ligand>
</feature>
<feature type="binding site" evidence="2">
    <location>
        <position position="262"/>
    </location>
    <ligand>
        <name>NAD(+)</name>
        <dbReference type="ChEBI" id="CHEBI:57540"/>
    </ligand>
</feature>
<feature type="binding site" evidence="2">
    <location>
        <position position="268"/>
    </location>
    <ligand>
        <name>NAD(+)</name>
        <dbReference type="ChEBI" id="CHEBI:57540"/>
    </ligand>
</feature>
<feature type="binding site" evidence="2">
    <location>
        <position position="273"/>
    </location>
    <ligand>
        <name>NAD(+)</name>
        <dbReference type="ChEBI" id="CHEBI:57540"/>
    </ligand>
</feature>
<feature type="glycosylation site" description="N-linked (GlcNAc...) asparagine" evidence="3">
    <location>
        <position position="317"/>
    </location>
</feature>
<feature type="glycosylation site" description="N-linked (GlcNAc...) asparagine" evidence="3">
    <location>
        <position position="386"/>
    </location>
</feature>
<protein>
    <recommendedName>
        <fullName evidence="5">UDP-glucuronic acid decarboxylase 1</fullName>
        <ecNumber evidence="2">4.1.1.35</ecNumber>
    </recommendedName>
    <alternativeName>
        <fullName>UDP-glucuronate decarboxylase 1</fullName>
        <shortName>UXS-1</shortName>
    </alternativeName>
</protein>
<name>UXS1_XENTR</name>